<keyword id="KW-1185">Reference proteome</keyword>
<sequence>MYEAEDHEFFDVLYQQWSHTTEAKSRYWVVEFDGDEHLQWQVFAVDQTDGSKLWLGSFHREQDADFVAGLHGALPDLIRRLHDATDEAVRKDEANDIAQGQLAEALLENQGLKAQILELERQLDKETS</sequence>
<reference key="1">
    <citation type="journal article" date="1998" name="J. Mol. Biol.">
        <title>Genome structure of mycobacteriophage D29: implications for phage evolution.</title>
        <authorList>
            <person name="Ford M.E."/>
            <person name="Sarkis G.J."/>
            <person name="Belanger A.E."/>
            <person name="Hendrix R.W."/>
            <person name="Hatfull G.F."/>
        </authorList>
    </citation>
    <scope>NUCLEOTIDE SEQUENCE [LARGE SCALE GENOMIC DNA]</scope>
</reference>
<organismHost>
    <name type="scientific">Mycobacterium</name>
    <dbReference type="NCBI Taxonomy" id="1763"/>
</organismHost>
<dbReference type="EMBL" id="AF022214">
    <property type="protein sequence ID" value="AAC18480.1"/>
    <property type="molecule type" value="Genomic_DNA"/>
</dbReference>
<dbReference type="PIR" id="E72804">
    <property type="entry name" value="E72804"/>
</dbReference>
<dbReference type="RefSeq" id="NP_046855.1">
    <property type="nucleotide sequence ID" value="NC_001900.1"/>
</dbReference>
<dbReference type="SMR" id="O64230"/>
<dbReference type="GeneID" id="1261567"/>
<dbReference type="KEGG" id="vg:1261567"/>
<dbReference type="OrthoDB" id="14787at10239"/>
<dbReference type="Proteomes" id="UP000002131">
    <property type="component" value="Segment"/>
</dbReference>
<organism>
    <name type="scientific">Mycobacterium phage D29</name>
    <name type="common">Mycobacteriophage D29</name>
    <dbReference type="NCBI Taxonomy" id="28369"/>
    <lineage>
        <taxon>Viruses</taxon>
        <taxon>Duplodnaviria</taxon>
        <taxon>Heunggongvirae</taxon>
        <taxon>Uroviricota</taxon>
        <taxon>Caudoviricetes</taxon>
        <taxon>Fromanvirus</taxon>
    </lineage>
</organism>
<name>VG39_BPMD2</name>
<feature type="chain" id="PRO_0000164762" description="Gene 39 protein">
    <location>
        <begin position="1"/>
        <end position="128"/>
    </location>
</feature>
<gene>
    <name type="primary">39</name>
</gene>
<accession>O64230</accession>
<proteinExistence type="predicted"/>
<protein>
    <recommendedName>
        <fullName>Gene 39 protein</fullName>
    </recommendedName>
    <alternativeName>
        <fullName>Gp39</fullName>
    </alternativeName>
</protein>